<dbReference type="EMBL" id="AY028700">
    <property type="protein sequence ID" value="AAK21962.1"/>
    <property type="molecule type" value="mRNA"/>
</dbReference>
<dbReference type="EMBL" id="AY502063">
    <property type="protein sequence ID" value="AAR89453.1"/>
    <property type="molecule type" value="mRNA"/>
</dbReference>
<dbReference type="EMBL" id="BC069459">
    <property type="protein sequence ID" value="AAH69459.1"/>
    <property type="molecule type" value="mRNA"/>
</dbReference>
<dbReference type="CCDS" id="CCDS5992.2">
    <molecule id="Q96LD1-2"/>
</dbReference>
<dbReference type="RefSeq" id="NP_001309808.1">
    <property type="nucleotide sequence ID" value="NM_001322879.1"/>
</dbReference>
<dbReference type="RefSeq" id="NP_001309809.1">
    <property type="nucleotide sequence ID" value="NM_001322880.1"/>
</dbReference>
<dbReference type="RefSeq" id="NP_001309810.1">
    <property type="nucleotide sequence ID" value="NM_001322881.1"/>
</dbReference>
<dbReference type="RefSeq" id="NP_631906.2">
    <molecule id="Q96LD1-2"/>
    <property type="nucleotide sequence ID" value="NM_139167.4"/>
</dbReference>
<dbReference type="SMR" id="Q96LD1"/>
<dbReference type="BioGRID" id="126488">
    <property type="interactions" value="34"/>
</dbReference>
<dbReference type="ComplexPortal" id="CPX-2453">
    <property type="entry name" value="Dystrophin glycoprotein complex, CNS variant"/>
</dbReference>
<dbReference type="FunCoup" id="Q96LD1">
    <property type="interactions" value="38"/>
</dbReference>
<dbReference type="IntAct" id="Q96LD1">
    <property type="interactions" value="25"/>
</dbReference>
<dbReference type="STRING" id="9606.ENSP00000371512"/>
<dbReference type="GlyCosmos" id="Q96LD1">
    <property type="glycosylation" value="2 sites, No reported glycans"/>
</dbReference>
<dbReference type="GlyGen" id="Q96LD1">
    <property type="glycosylation" value="3 sites, 1 O-linked glycan (1 site)"/>
</dbReference>
<dbReference type="iPTMnet" id="Q96LD1"/>
<dbReference type="PhosphoSitePlus" id="Q96LD1"/>
<dbReference type="BioMuta" id="SGCZ"/>
<dbReference type="DMDM" id="41018110"/>
<dbReference type="jPOST" id="Q96LD1"/>
<dbReference type="MassIVE" id="Q96LD1"/>
<dbReference type="PaxDb" id="9606-ENSP00000371512"/>
<dbReference type="PeptideAtlas" id="Q96LD1"/>
<dbReference type="ProteomicsDB" id="77205">
    <molecule id="Q96LD1-2"/>
</dbReference>
<dbReference type="Antibodypedia" id="2695">
    <property type="antibodies" value="21 antibodies from 12 providers"/>
</dbReference>
<dbReference type="DNASU" id="137868"/>
<dbReference type="Ensembl" id="ENST00000382080.6">
    <molecule id="Q96LD1-2"/>
    <property type="protein sequence ID" value="ENSP00000371512.1"/>
    <property type="gene ID" value="ENSG00000185053.14"/>
</dbReference>
<dbReference type="GeneID" id="137868"/>
<dbReference type="KEGG" id="hsa:137868"/>
<dbReference type="MANE-Select" id="ENST00000382080.6">
    <molecule id="Q96LD1-2"/>
    <property type="protein sequence ID" value="ENSP00000371512.1"/>
    <property type="RefSeq nucleotide sequence ID" value="NM_139167.4"/>
    <property type="RefSeq protein sequence ID" value="NP_631906.2"/>
</dbReference>
<dbReference type="UCSC" id="uc003wwq.4">
    <molecule id="Q96LD1-1"/>
    <property type="organism name" value="human"/>
</dbReference>
<dbReference type="AGR" id="HGNC:14075"/>
<dbReference type="CTD" id="137868"/>
<dbReference type="DisGeNET" id="137868"/>
<dbReference type="GeneCards" id="SGCZ"/>
<dbReference type="HGNC" id="HGNC:14075">
    <property type="gene designation" value="SGCZ"/>
</dbReference>
<dbReference type="HPA" id="ENSG00000185053">
    <property type="expression patterns" value="Tissue enhanced (ovary)"/>
</dbReference>
<dbReference type="MIM" id="608113">
    <property type="type" value="gene"/>
</dbReference>
<dbReference type="neXtProt" id="NX_Q96LD1"/>
<dbReference type="OpenTargets" id="ENSG00000185053"/>
<dbReference type="PharmGKB" id="PA38378"/>
<dbReference type="VEuPathDB" id="HostDB:ENSG00000185053"/>
<dbReference type="eggNOG" id="KOG3950">
    <property type="taxonomic scope" value="Eukaryota"/>
</dbReference>
<dbReference type="GeneTree" id="ENSGT00940000157146"/>
<dbReference type="HOGENOM" id="CLU_043450_0_0_1"/>
<dbReference type="InParanoid" id="Q96LD1"/>
<dbReference type="OMA" id="FQMTREQ"/>
<dbReference type="OrthoDB" id="5973998at2759"/>
<dbReference type="PAN-GO" id="Q96LD1">
    <property type="GO annotations" value="4 GO annotations based on evolutionary models"/>
</dbReference>
<dbReference type="PhylomeDB" id="Q96LD1"/>
<dbReference type="TreeFam" id="TF313538"/>
<dbReference type="PathwayCommons" id="Q96LD1"/>
<dbReference type="Reactome" id="R-HSA-9913351">
    <property type="pathway name" value="Formation of the dystrophin-glycoprotein complex (DGC)"/>
</dbReference>
<dbReference type="SignaLink" id="Q96LD1"/>
<dbReference type="BioGRID-ORCS" id="137868">
    <property type="hits" value="11 hits in 1146 CRISPR screens"/>
</dbReference>
<dbReference type="ChiTaRS" id="SGCZ">
    <property type="organism name" value="human"/>
</dbReference>
<dbReference type="GeneWiki" id="SGCZ"/>
<dbReference type="GenomeRNAi" id="137868"/>
<dbReference type="Pharos" id="Q96LD1">
    <property type="development level" value="Tbio"/>
</dbReference>
<dbReference type="PRO" id="PR:Q96LD1"/>
<dbReference type="Proteomes" id="UP000005640">
    <property type="component" value="Chromosome 8"/>
</dbReference>
<dbReference type="RNAct" id="Q96LD1">
    <property type="molecule type" value="protein"/>
</dbReference>
<dbReference type="Bgee" id="ENSG00000185053">
    <property type="expression patterns" value="Expressed in male germ line stem cell (sensu Vertebrata) in testis and 48 other cell types or tissues"/>
</dbReference>
<dbReference type="ExpressionAtlas" id="Q96LD1">
    <property type="expression patterns" value="baseline and differential"/>
</dbReference>
<dbReference type="GO" id="GO:0005856">
    <property type="term" value="C:cytoskeleton"/>
    <property type="evidence" value="ECO:0007669"/>
    <property type="project" value="UniProtKB-SubCell"/>
</dbReference>
<dbReference type="GO" id="GO:0005789">
    <property type="term" value="C:endoplasmic reticulum membrane"/>
    <property type="evidence" value="ECO:0000304"/>
    <property type="project" value="Reactome"/>
</dbReference>
<dbReference type="GO" id="GO:0000139">
    <property type="term" value="C:Golgi membrane"/>
    <property type="evidence" value="ECO:0000304"/>
    <property type="project" value="Reactome"/>
</dbReference>
<dbReference type="GO" id="GO:0005886">
    <property type="term" value="C:plasma membrane"/>
    <property type="evidence" value="ECO:0000304"/>
    <property type="project" value="Reactome"/>
</dbReference>
<dbReference type="GO" id="GO:0016012">
    <property type="term" value="C:sarcoglycan complex"/>
    <property type="evidence" value="ECO:0000318"/>
    <property type="project" value="GO_Central"/>
</dbReference>
<dbReference type="GO" id="GO:0042383">
    <property type="term" value="C:sarcolemma"/>
    <property type="evidence" value="ECO:0000318"/>
    <property type="project" value="GO_Central"/>
</dbReference>
<dbReference type="GO" id="GO:0048738">
    <property type="term" value="P:cardiac muscle tissue development"/>
    <property type="evidence" value="ECO:0000318"/>
    <property type="project" value="GO_Central"/>
</dbReference>
<dbReference type="GO" id="GO:0060047">
    <property type="term" value="P:heart contraction"/>
    <property type="evidence" value="ECO:0000318"/>
    <property type="project" value="GO_Central"/>
</dbReference>
<dbReference type="GO" id="GO:0061024">
    <property type="term" value="P:membrane organization"/>
    <property type="evidence" value="ECO:0000304"/>
    <property type="project" value="BHF-UCL"/>
</dbReference>
<dbReference type="GO" id="GO:0046716">
    <property type="term" value="P:muscle cell cellular homeostasis"/>
    <property type="evidence" value="ECO:0000304"/>
    <property type="project" value="BHF-UCL"/>
</dbReference>
<dbReference type="GO" id="GO:0055001">
    <property type="term" value="P:muscle cell development"/>
    <property type="evidence" value="ECO:0000304"/>
    <property type="project" value="BHF-UCL"/>
</dbReference>
<dbReference type="InterPro" id="IPR006875">
    <property type="entry name" value="Sarcoglycan"/>
</dbReference>
<dbReference type="InterPro" id="IPR039972">
    <property type="entry name" value="Sarcoglycan_gamma/delta/zeta"/>
</dbReference>
<dbReference type="PANTHER" id="PTHR12939">
    <property type="entry name" value="SARCOGLYCAN"/>
    <property type="match status" value="1"/>
</dbReference>
<dbReference type="PANTHER" id="PTHR12939:SF5">
    <property type="entry name" value="ZETA-SARCOGLYCAN"/>
    <property type="match status" value="1"/>
</dbReference>
<dbReference type="Pfam" id="PF04790">
    <property type="entry name" value="Sarcoglycan_1"/>
    <property type="match status" value="1"/>
</dbReference>
<protein>
    <recommendedName>
        <fullName>Zeta-sarcoglycan</fullName>
        <shortName>Zeta-SG</shortName>
    </recommendedName>
    <alternativeName>
        <fullName>ZSG1</fullName>
    </alternativeName>
</protein>
<name>SGCZ_HUMAN</name>
<feature type="chain" id="PRO_0000175251" description="Zeta-sarcoglycan">
    <location>
        <begin position="1"/>
        <end position="299"/>
    </location>
</feature>
<feature type="topological domain" description="Cytoplasmic" evidence="2">
    <location>
        <begin position="1"/>
        <end position="37"/>
    </location>
</feature>
<feature type="transmembrane region" description="Helical; Signal-anchor for type II membrane protein" evidence="2">
    <location>
        <begin position="38"/>
        <end position="58"/>
    </location>
</feature>
<feature type="topological domain" description="Extracellular" evidence="2">
    <location>
        <begin position="59"/>
        <end position="299"/>
    </location>
</feature>
<feature type="glycosylation site" description="N-linked (GlcNAc...) asparagine" evidence="2">
    <location>
        <position position="62"/>
    </location>
</feature>
<feature type="glycosylation site" description="N-linked (GlcNAc...) asparagine" evidence="2">
    <location>
        <position position="110"/>
    </location>
</feature>
<feature type="disulfide bond" evidence="2">
    <location>
        <begin position="273"/>
        <end position="289"/>
    </location>
</feature>
<feature type="splice variant" id="VSP_037410" description="In isoform 2." evidence="3">
    <original>M</original>
    <variation>MDRSTNLDIEELKM</variation>
    <location>
        <position position="1"/>
    </location>
</feature>
<keyword id="KW-0025">Alternative splicing</keyword>
<keyword id="KW-1003">Cell membrane</keyword>
<keyword id="KW-0963">Cytoplasm</keyword>
<keyword id="KW-0206">Cytoskeleton</keyword>
<keyword id="KW-1015">Disulfide bond</keyword>
<keyword id="KW-0325">Glycoprotein</keyword>
<keyword id="KW-0472">Membrane</keyword>
<keyword id="KW-1267">Proteomics identification</keyword>
<keyword id="KW-1185">Reference proteome</keyword>
<keyword id="KW-0735">Signal-anchor</keyword>
<keyword id="KW-0812">Transmembrane</keyword>
<keyword id="KW-1133">Transmembrane helix</keyword>
<sequence length="299" mass="32949">MTREQYILATQQNNLPRTENAQLYPVGIYGWRKRCLYFFVLLLLVTMIVNLAMTIWILKVMNFTVDGMGNLRVTKKGIRLEGISEFLLPLYVKEIHSRKDSPLVLQSDRNVTVNARNHMGQLTGQLTIGADAVEAQCKRFEVRASEDGRVLFSADEDEITIGAEKLKVTGTEGAVFGHSVETPHIRAEPSQDLRLESPTRSLIMEAPRGVQVSAAAGDFKATCRKELHLQSTEGEIFLNAETIKLGNLPTGSFSSSSPSSSSSRQTVYELCVCPNGKLYLSPAGVGSTCQSSSNICLWS</sequence>
<accession>Q96LD1</accession>
<accession>Q6REU0</accession>
<evidence type="ECO:0000250" key="1"/>
<evidence type="ECO:0000255" key="2"/>
<evidence type="ECO:0000303" key="3">
    <source ref="2"/>
</evidence>
<evidence type="ECO:0000305" key="4"/>
<organism>
    <name type="scientific">Homo sapiens</name>
    <name type="common">Human</name>
    <dbReference type="NCBI Taxonomy" id="9606"/>
    <lineage>
        <taxon>Eukaryota</taxon>
        <taxon>Metazoa</taxon>
        <taxon>Chordata</taxon>
        <taxon>Craniata</taxon>
        <taxon>Vertebrata</taxon>
        <taxon>Euteleostomi</taxon>
        <taxon>Mammalia</taxon>
        <taxon>Eutheria</taxon>
        <taxon>Euarchontoglires</taxon>
        <taxon>Primates</taxon>
        <taxon>Haplorrhini</taxon>
        <taxon>Catarrhini</taxon>
        <taxon>Hominidae</taxon>
        <taxon>Homo</taxon>
    </lineage>
</organism>
<proteinExistence type="evidence at protein level"/>
<gene>
    <name type="primary">SGCZ</name>
</gene>
<reference key="1">
    <citation type="submission" date="2001-03" db="EMBL/GenBank/DDBJ databases">
        <title>Identification of a novel human sarcoglycan.</title>
        <authorList>
            <person name="Kutzick C."/>
            <person name="Herrmann R."/>
            <person name="Voit T."/>
        </authorList>
    </citation>
    <scope>NUCLEOTIDE SEQUENCE [MRNA] (ISOFORM 1)</scope>
</reference>
<reference key="2">
    <citation type="submission" date="2003-12" db="EMBL/GenBank/DDBJ databases">
        <title>Human zeta-sarcoglycan, a novel member of the sarcoglycan family.</title>
        <authorList>
            <person name="Kutzick C."/>
            <person name="Herrmann R."/>
            <person name="Voit T."/>
        </authorList>
    </citation>
    <scope>NUCLEOTIDE SEQUENCE [MRNA] (ISOFORM 2)</scope>
    <source>
        <tissue>Skeletal muscle</tissue>
    </source>
</reference>
<reference key="3">
    <citation type="journal article" date="2004" name="Genome Res.">
        <title>The status, quality, and expansion of the NIH full-length cDNA project: the Mammalian Gene Collection (MGC).</title>
        <authorList>
            <consortium name="The MGC Project Team"/>
        </authorList>
    </citation>
    <scope>NUCLEOTIDE SEQUENCE [LARGE SCALE MRNA] (ISOFORM 1)</scope>
</reference>
<comment type="function">
    <text evidence="1">Component of the sarcoglycan complex, a subcomplex of the dystrophin-glycoprotein complex which forms a link between the F-actin cytoskeleton and the extracellular matrix. May play a role in the maintenance of striated muscle membrane stability (By similarity).</text>
</comment>
<comment type="subcellular location">
    <subcellularLocation>
        <location evidence="1">Cell membrane</location>
        <location evidence="1">Sarcolemma</location>
        <topology evidence="1">Single-pass type II membrane protein</topology>
    </subcellularLocation>
    <subcellularLocation>
        <location evidence="1">Cytoplasm</location>
        <location evidence="1">Cytoskeleton</location>
    </subcellularLocation>
</comment>
<comment type="alternative products">
    <event type="alternative splicing"/>
    <isoform>
        <id>Q96LD1-1</id>
        <name>1</name>
        <sequence type="displayed"/>
    </isoform>
    <isoform>
        <id>Q96LD1-2</id>
        <name>2</name>
        <sequence type="described" ref="VSP_037410"/>
    </isoform>
</comment>
<comment type="similarity">
    <text evidence="4">Belongs to the sarcoglycan beta/delta/gamma/zeta family.</text>
</comment>